<reference key="1">
    <citation type="journal article" date="1995" name="Yeast">
        <title>Nucleotide sequence and analysis of the centromeric region of yeast chromosome IX.</title>
        <authorList>
            <person name="Voss H."/>
            <person name="Tamames J."/>
            <person name="Teodoru C."/>
            <person name="Valencia A."/>
            <person name="Sensen C."/>
            <person name="Wiemann S."/>
            <person name="Schwager C."/>
            <person name="Zimmermann J."/>
            <person name="Sander C."/>
            <person name="Ansorge W."/>
        </authorList>
    </citation>
    <scope>NUCLEOTIDE SEQUENCE [GENOMIC DNA]</scope>
    <source>
        <strain>ATCC 204508 / S288c</strain>
    </source>
</reference>
<reference key="2">
    <citation type="journal article" date="1997" name="Nature">
        <title>The nucleotide sequence of Saccharomyces cerevisiae chromosome IX.</title>
        <authorList>
            <person name="Churcher C.M."/>
            <person name="Bowman S."/>
            <person name="Badcock K."/>
            <person name="Bankier A.T."/>
            <person name="Brown D."/>
            <person name="Chillingworth T."/>
            <person name="Connor R."/>
            <person name="Devlin K."/>
            <person name="Gentles S."/>
            <person name="Hamlin N."/>
            <person name="Harris D.E."/>
            <person name="Horsnell T."/>
            <person name="Hunt S."/>
            <person name="Jagels K."/>
            <person name="Jones M."/>
            <person name="Lye G."/>
            <person name="Moule S."/>
            <person name="Odell C."/>
            <person name="Pearson D."/>
            <person name="Rajandream M.A."/>
            <person name="Rice P."/>
            <person name="Rowley N."/>
            <person name="Skelton J."/>
            <person name="Smith V."/>
            <person name="Walsh S.V."/>
            <person name="Whitehead S."/>
            <person name="Barrell B.G."/>
        </authorList>
    </citation>
    <scope>NUCLEOTIDE SEQUENCE [LARGE SCALE GENOMIC DNA]</scope>
    <source>
        <strain>ATCC 204508 / S288c</strain>
    </source>
</reference>
<reference key="3">
    <citation type="journal article" date="2014" name="G3 (Bethesda)">
        <title>The reference genome sequence of Saccharomyces cerevisiae: Then and now.</title>
        <authorList>
            <person name="Engel S.R."/>
            <person name="Dietrich F.S."/>
            <person name="Fisk D.G."/>
            <person name="Binkley G."/>
            <person name="Balakrishnan R."/>
            <person name="Costanzo M.C."/>
            <person name="Dwight S.S."/>
            <person name="Hitz B.C."/>
            <person name="Karra K."/>
            <person name="Nash R.S."/>
            <person name="Weng S."/>
            <person name="Wong E.D."/>
            <person name="Lloyd P."/>
            <person name="Skrzypek M.S."/>
            <person name="Miyasato S.R."/>
            <person name="Simison M."/>
            <person name="Cherry J.M."/>
        </authorList>
    </citation>
    <scope>GENOME REANNOTATION</scope>
    <source>
        <strain>ATCC 204508 / S288c</strain>
    </source>
</reference>
<reference key="4">
    <citation type="journal article" date="2003" name="Nature">
        <title>Global analysis of protein expression in yeast.</title>
        <authorList>
            <person name="Ghaemmaghami S."/>
            <person name="Huh W.-K."/>
            <person name="Bower K."/>
            <person name="Howson R.W."/>
            <person name="Belle A."/>
            <person name="Dephoure N."/>
            <person name="O'Shea E.K."/>
            <person name="Weissman J.S."/>
        </authorList>
    </citation>
    <scope>LEVEL OF PROTEIN EXPRESSION [LARGE SCALE ANALYSIS]</scope>
</reference>
<protein>
    <recommendedName>
        <fullName>Ankyrin repeat-containing protein YIL001W</fullName>
    </recommendedName>
</protein>
<comment type="interaction">
    <interactant intactId="EBI-24911">
        <id>P40560</id>
    </interactant>
    <interactant intactId="EBI-23065">
        <id>P53202</id>
        <label>CUL3</label>
    </interactant>
    <organismsDiffer>false</organismsDiffer>
    <experiments>3</experiments>
</comment>
<comment type="interaction">
    <interactant intactId="EBI-24911">
        <id>P40560</id>
    </interactant>
    <interactant intactId="EBI-31686">
        <id>Q08273</id>
        <label>HRT1</label>
    </interactant>
    <organismsDiffer>false</organismsDiffer>
    <experiments>5</experiments>
</comment>
<comment type="miscellaneous">
    <text evidence="2">Present with 195 molecules/cell in log phase SD medium.</text>
</comment>
<sequence>MADKLMDKNFEELCYSCRTGDMDNVDRLISTGVNVNSVDKFDNSPLFLASLCGHEAVVKLLLQRGAVCDRDRYEGARCIYGALTDTIRDTLLSYDISKAVDVKQPFATHISSMYNDEGFLKRDITFRVSNGKLFTAHKFLLCARSEILAEKMVNEWAKHEIVSLEVRPDIFDIFLKFLYLIPILHQIEPGQYEELIELSSKFDIELLPEFLDKARHTADPTEKSRLMSDYQYKFTEVARSQLLIFVNNCIFRSTVDLANSERRVFSLMNCPAYPDVQLMVKNRNGAIRIYPCHLAVLSRAEYFKVMFTNNFKEKVTYIKAKHVTGKYNSIIPQLTLPNCEFEVAEIILRYLYADNTDIPWMYAVDVLLLADILLEDRLKTIASTIITQSKEFIQQYNVFDVLYLSWEIGVERLEQFAAKFIAIHLQELYKDPEIKRAIMLSSQRISLRQETDTIELVDDIRYYLLRKYSFEPDDVELFENQDDLEYLKQVGYLEYRKDMGMLDNILADLELDV</sequence>
<keyword id="KW-0040">ANK repeat</keyword>
<keyword id="KW-1185">Reference proteome</keyword>
<keyword id="KW-0677">Repeat</keyword>
<dbReference type="EMBL" id="X79743">
    <property type="status" value="NOT_ANNOTATED_CDS"/>
    <property type="molecule type" value="Genomic_DNA"/>
</dbReference>
<dbReference type="EMBL" id="Z38062">
    <property type="protein sequence ID" value="CAA86202.1"/>
    <property type="molecule type" value="Genomic_DNA"/>
</dbReference>
<dbReference type="EMBL" id="BK006942">
    <property type="protein sequence ID" value="DAA08546.1"/>
    <property type="molecule type" value="Genomic_DNA"/>
</dbReference>
<dbReference type="PIR" id="S48434">
    <property type="entry name" value="S48434"/>
</dbReference>
<dbReference type="RefSeq" id="NP_012265.3">
    <property type="nucleotide sequence ID" value="NM_001179351.3"/>
</dbReference>
<dbReference type="SMR" id="P40560"/>
<dbReference type="BioGRID" id="34991">
    <property type="interactions" value="26"/>
</dbReference>
<dbReference type="DIP" id="DIP-1375N"/>
<dbReference type="FunCoup" id="P40560">
    <property type="interactions" value="81"/>
</dbReference>
<dbReference type="IntAct" id="P40560">
    <property type="interactions" value="4"/>
</dbReference>
<dbReference type="MINT" id="P40560"/>
<dbReference type="STRING" id="4932.YIL001W"/>
<dbReference type="iPTMnet" id="P40560"/>
<dbReference type="PaxDb" id="4932-YIL001W"/>
<dbReference type="PeptideAtlas" id="P40560"/>
<dbReference type="EnsemblFungi" id="YIL001W_mRNA">
    <property type="protein sequence ID" value="YIL001W"/>
    <property type="gene ID" value="YIL001W"/>
</dbReference>
<dbReference type="GeneID" id="854816"/>
<dbReference type="KEGG" id="sce:YIL001W"/>
<dbReference type="AGR" id="SGD:S000001263"/>
<dbReference type="SGD" id="S000001263">
    <property type="gene designation" value="YIL001W"/>
</dbReference>
<dbReference type="VEuPathDB" id="FungiDB:YIL001W"/>
<dbReference type="eggNOG" id="KOG0511">
    <property type="taxonomic scope" value="Eukaryota"/>
</dbReference>
<dbReference type="HOGENOM" id="CLU_022885_2_0_1"/>
<dbReference type="InParanoid" id="P40560"/>
<dbReference type="OMA" id="EGARCIY"/>
<dbReference type="OrthoDB" id="684045at2759"/>
<dbReference type="BioCyc" id="YEAST:G3O-31281-MONOMER"/>
<dbReference type="BioGRID-ORCS" id="854816">
    <property type="hits" value="0 hits in 10 CRISPR screens"/>
</dbReference>
<dbReference type="PRO" id="PR:P40560"/>
<dbReference type="Proteomes" id="UP000002311">
    <property type="component" value="Chromosome IX"/>
</dbReference>
<dbReference type="RNAct" id="P40560">
    <property type="molecule type" value="protein"/>
</dbReference>
<dbReference type="GO" id="GO:0005737">
    <property type="term" value="C:cytoplasm"/>
    <property type="evidence" value="ECO:0007005"/>
    <property type="project" value="SGD"/>
</dbReference>
<dbReference type="GO" id="GO:0000151">
    <property type="term" value="C:ubiquitin ligase complex"/>
    <property type="evidence" value="ECO:0000318"/>
    <property type="project" value="GO_Central"/>
</dbReference>
<dbReference type="CDD" id="cd18497">
    <property type="entry name" value="BACK_ABTB1_BPOZ"/>
    <property type="match status" value="1"/>
</dbReference>
<dbReference type="CDD" id="cd18296">
    <property type="entry name" value="BTB2_POZ_ABTB1_BPOZ1"/>
    <property type="match status" value="1"/>
</dbReference>
<dbReference type="CDD" id="cd18186">
    <property type="entry name" value="BTB_POZ_ZBTB_KLHL-like"/>
    <property type="match status" value="1"/>
</dbReference>
<dbReference type="Gene3D" id="1.25.40.20">
    <property type="entry name" value="Ankyrin repeat-containing domain"/>
    <property type="match status" value="1"/>
</dbReference>
<dbReference type="Gene3D" id="3.30.710.10">
    <property type="entry name" value="Potassium Channel Kv1.1, Chain A"/>
    <property type="match status" value="2"/>
</dbReference>
<dbReference type="InterPro" id="IPR044515">
    <property type="entry name" value="ABTB1"/>
</dbReference>
<dbReference type="InterPro" id="IPR002110">
    <property type="entry name" value="Ankyrin_rpt"/>
</dbReference>
<dbReference type="InterPro" id="IPR036770">
    <property type="entry name" value="Ankyrin_rpt-contain_sf"/>
</dbReference>
<dbReference type="InterPro" id="IPR000210">
    <property type="entry name" value="BTB/POZ_dom"/>
</dbReference>
<dbReference type="InterPro" id="IPR011333">
    <property type="entry name" value="SKP1/BTB/POZ_sf"/>
</dbReference>
<dbReference type="PANTHER" id="PTHR46231">
    <property type="entry name" value="ANKYRIN REPEAT AND BTB/POZ DOMAIN-CONTAINING PROTEIN 1"/>
    <property type="match status" value="1"/>
</dbReference>
<dbReference type="PANTHER" id="PTHR46231:SF1">
    <property type="entry name" value="ANKYRIN REPEAT AND BTB_POZ DOMAIN-CONTAINING PROTEIN 1"/>
    <property type="match status" value="1"/>
</dbReference>
<dbReference type="Pfam" id="PF13637">
    <property type="entry name" value="Ank_4"/>
    <property type="match status" value="1"/>
</dbReference>
<dbReference type="Pfam" id="PF00651">
    <property type="entry name" value="BTB"/>
    <property type="match status" value="2"/>
</dbReference>
<dbReference type="SMART" id="SM00248">
    <property type="entry name" value="ANK"/>
    <property type="match status" value="2"/>
</dbReference>
<dbReference type="SMART" id="SM00225">
    <property type="entry name" value="BTB"/>
    <property type="match status" value="2"/>
</dbReference>
<dbReference type="SUPFAM" id="SSF48403">
    <property type="entry name" value="Ankyrin repeat"/>
    <property type="match status" value="1"/>
</dbReference>
<dbReference type="SUPFAM" id="SSF54695">
    <property type="entry name" value="POZ domain"/>
    <property type="match status" value="2"/>
</dbReference>
<dbReference type="PROSITE" id="PS50297">
    <property type="entry name" value="ANK_REP_REGION"/>
    <property type="match status" value="1"/>
</dbReference>
<dbReference type="PROSITE" id="PS50088">
    <property type="entry name" value="ANK_REPEAT"/>
    <property type="match status" value="1"/>
</dbReference>
<dbReference type="PROSITE" id="PS50097">
    <property type="entry name" value="BTB"/>
    <property type="match status" value="2"/>
</dbReference>
<organism>
    <name type="scientific">Saccharomyces cerevisiae (strain ATCC 204508 / S288c)</name>
    <name type="common">Baker's yeast</name>
    <dbReference type="NCBI Taxonomy" id="559292"/>
    <lineage>
        <taxon>Eukaryota</taxon>
        <taxon>Fungi</taxon>
        <taxon>Dikarya</taxon>
        <taxon>Ascomycota</taxon>
        <taxon>Saccharomycotina</taxon>
        <taxon>Saccharomycetes</taxon>
        <taxon>Saccharomycetales</taxon>
        <taxon>Saccharomycetaceae</taxon>
        <taxon>Saccharomyces</taxon>
    </lineage>
</organism>
<accession>P40560</accession>
<accession>D6VVT0</accession>
<evidence type="ECO:0000255" key="1">
    <source>
        <dbReference type="PROSITE-ProRule" id="PRU00037"/>
    </source>
</evidence>
<evidence type="ECO:0000269" key="2">
    <source>
    </source>
</evidence>
<name>YIA1_YEAST</name>
<feature type="chain" id="PRO_0000067246" description="Ankyrin repeat-containing protein YIL001W">
    <location>
        <begin position="1"/>
        <end position="513"/>
    </location>
</feature>
<feature type="repeat" description="ANK 1">
    <location>
        <begin position="8"/>
        <end position="37"/>
    </location>
</feature>
<feature type="repeat" description="ANK 2">
    <location>
        <begin position="41"/>
        <end position="70"/>
    </location>
</feature>
<feature type="domain" description="BTB 1" evidence="1">
    <location>
        <begin position="122"/>
        <end position="179"/>
    </location>
</feature>
<feature type="domain" description="BTB 2" evidence="1">
    <location>
        <begin position="274"/>
        <end position="360"/>
    </location>
</feature>
<proteinExistence type="evidence at protein level"/>
<gene>
    <name type="ordered locus">YIL001W</name>
    <name type="ORF">YIA1W</name>
</gene>